<sequence length="254" mass="27612">MESYLVDTYQGIPYTAAVQVDLVEKDLLPASLTIWFPLFQANTPPAVLLDQLKTLTITTLYAASQSGPILKVNASAQGAAMSVLPKKFEVNATVALDEYSKLEFDKLTVCEVKTVYLTTMKPYGMVSKFVSSAKPVGKKTHDLIALCDFMDLEKNTPVTIPAFIKSVSIKESESATVEAAISSEADQALTQAKIAPYAGLIMIMTMNNPKGIFKKLGAGTQVIVELGAYVQAESISKICKTWSHQGTRYVLKSR</sequence>
<evidence type="ECO:0000250" key="1">
    <source>
        <dbReference type="UniProtKB" id="P0DOE7"/>
    </source>
</evidence>
<evidence type="ECO:0000305" key="2"/>
<organismHost>
    <name type="scientific">Homo sapiens</name>
    <name type="common">Human</name>
    <dbReference type="NCBI Taxonomy" id="9606"/>
</organismHost>
<reference key="1">
    <citation type="journal article" date="2003" name="Virology">
        <title>Genetic diversity between human metapneumovirus subgroups.</title>
        <authorList>
            <person name="Biacchesi S."/>
            <person name="Skiadopoulos M.H."/>
            <person name="Boivin G."/>
            <person name="Hanson C.T."/>
            <person name="Murphy B.R."/>
            <person name="Collins P.L."/>
            <person name="Buchholz U.J."/>
        </authorList>
    </citation>
    <scope>NUCLEOTIDE SEQUENCE [GENOMIC RNA]</scope>
</reference>
<reference key="2">
    <citation type="journal article" date="2005" name="J. Virol.">
        <title>Chimeric recombinant human metapneumoviruses with the nucleoprotein or phosphoprotein open reading frame replaced by that of avian metapneumovirus exhibit improved growth in vitro and attenuation in vivo.</title>
        <authorList>
            <person name="Pham Q.N."/>
            <person name="Biacchesi S."/>
            <person name="Skiadopoulos M.H."/>
            <person name="Murphy B.R."/>
            <person name="Collins P.L."/>
            <person name="Buchholz U.J."/>
        </authorList>
    </citation>
    <scope>NUCLEOTIDE SEQUENCE [GENOMIC RNA]</scope>
</reference>
<feature type="chain" id="PRO_0000394811" description="Matrix protein">
    <location>
        <begin position="1"/>
        <end position="254"/>
    </location>
</feature>
<feature type="region of interest" description="Interaction with M2-1" evidence="1">
    <location>
        <begin position="1"/>
        <end position="110"/>
    </location>
</feature>
<feature type="region of interest" description="Nuclear targeting and binding to host importin KPNB1" evidence="1">
    <location>
        <begin position="110"/>
        <end position="183"/>
    </location>
</feature>
<feature type="short sequence motif" description="Nuclear export signal" evidence="1">
    <location>
        <begin position="194"/>
        <end position="206"/>
    </location>
</feature>
<feature type="modified residue" description="Phosphothreonine" evidence="1">
    <location>
        <position position="205"/>
    </location>
</feature>
<name>MATRX_HMPVC</name>
<gene>
    <name type="primary">M</name>
</gene>
<dbReference type="EMBL" id="AY297749">
    <property type="protein sequence ID" value="AAQ67694.1"/>
    <property type="molecule type" value="Genomic_RNA"/>
</dbReference>
<dbReference type="RefSeq" id="YP_012607.1">
    <property type="nucleotide sequence ID" value="NC_004148.2"/>
</dbReference>
<dbReference type="SMR" id="Q6WB99"/>
<dbReference type="Proteomes" id="UP000001398">
    <property type="component" value="Segment"/>
</dbReference>
<dbReference type="GO" id="GO:0030430">
    <property type="term" value="C:host cell cytoplasm"/>
    <property type="evidence" value="ECO:0007669"/>
    <property type="project" value="UniProtKB-SubCell"/>
</dbReference>
<dbReference type="GO" id="GO:0042025">
    <property type="term" value="C:host cell nucleus"/>
    <property type="evidence" value="ECO:0007669"/>
    <property type="project" value="UniProtKB-SubCell"/>
</dbReference>
<dbReference type="GO" id="GO:0020002">
    <property type="term" value="C:host cell plasma membrane"/>
    <property type="evidence" value="ECO:0007669"/>
    <property type="project" value="UniProtKB-SubCell"/>
</dbReference>
<dbReference type="GO" id="GO:0016020">
    <property type="term" value="C:membrane"/>
    <property type="evidence" value="ECO:0007669"/>
    <property type="project" value="UniProtKB-KW"/>
</dbReference>
<dbReference type="GO" id="GO:0019031">
    <property type="term" value="C:viral envelope"/>
    <property type="evidence" value="ECO:0007669"/>
    <property type="project" value="InterPro"/>
</dbReference>
<dbReference type="GO" id="GO:0039660">
    <property type="term" value="F:structural constituent of virion"/>
    <property type="evidence" value="ECO:0007669"/>
    <property type="project" value="UniProtKB-KW"/>
</dbReference>
<dbReference type="GO" id="GO:0019068">
    <property type="term" value="P:virion assembly"/>
    <property type="evidence" value="ECO:0007669"/>
    <property type="project" value="InterPro"/>
</dbReference>
<dbReference type="Gene3D" id="2.70.20.30">
    <property type="entry name" value="HRSV-S2 matrix protein, N-terminal domain"/>
    <property type="match status" value="1"/>
</dbReference>
<dbReference type="InterPro" id="IPR055461">
    <property type="entry name" value="Matrix_Pneumo_C"/>
</dbReference>
<dbReference type="InterPro" id="IPR005056">
    <property type="entry name" value="MATRX_N_pneumovirus"/>
</dbReference>
<dbReference type="InterPro" id="IPR043062">
    <property type="entry name" value="Pneu_matrix_N"/>
</dbReference>
<dbReference type="Pfam" id="PF23766">
    <property type="entry name" value="Matrix_Pneumo_C"/>
    <property type="match status" value="1"/>
</dbReference>
<dbReference type="Pfam" id="PF03393">
    <property type="entry name" value="Matrix_Pneumo_N"/>
    <property type="match status" value="1"/>
</dbReference>
<accession>Q6WB99</accession>
<proteinExistence type="inferred from homology"/>
<comment type="function">
    <text evidence="1">Plays a crucial role in virus assembly into filaments and budding. Early in infection, localizes in the nucleus where it may inhibit host cell transcription. Later in infection, traffics to the cytoplasm through the action of host CRM1 to associate with inclusion bodies, the site of viral transcription and replication. During virus assembly and budding, acts as a bridge between the nucleocapsid and the lipid bilayer.</text>
</comment>
<comment type="subunit">
    <text evidence="1">Forms dimers. Forms higher-order oligomers. Interacts with glycoprotein G (via N-terminus). Interacts with protein M2-1; this interaction directs the matrix protein localization to cytoplasmic inclusions comprising viral proteins L, N, P, and M2-1 and mediates the matrix protein association with the nucleocapsid.</text>
</comment>
<comment type="subcellular location">
    <subcellularLocation>
        <location evidence="1">Virion</location>
    </subcellularLocation>
    <subcellularLocation>
        <location evidence="1">Host cytoplasm</location>
    </subcellularLocation>
    <subcellularLocation>
        <location evidence="1">Host nucleus</location>
    </subcellularLocation>
    <subcellularLocation>
        <location evidence="1">Host cell membrane</location>
        <topology evidence="1">Peripheral membrane protein</topology>
        <orientation evidence="1">Cytoplasmic side</orientation>
    </subcellularLocation>
    <text evidence="1">In the cytoplasm, associates with inclusion bodies. During bud formation, associates at the inner side of the plasma membrane of infected cells.</text>
</comment>
<comment type="PTM">
    <text evidence="1">Phosphorylation is important for oligomerization.</text>
</comment>
<comment type="similarity">
    <text evidence="2">Belongs to the pneumovirinae M protein family.</text>
</comment>
<protein>
    <recommendedName>
        <fullName>Matrix protein</fullName>
    </recommendedName>
    <alternativeName>
        <fullName evidence="1">M protein</fullName>
    </alternativeName>
</protein>
<organism>
    <name type="scientific">Human metapneumovirus (strain CAN97-83)</name>
    <name type="common">HMPV</name>
    <dbReference type="NCBI Taxonomy" id="694067"/>
    <lineage>
        <taxon>Viruses</taxon>
        <taxon>Riboviria</taxon>
        <taxon>Orthornavirae</taxon>
        <taxon>Negarnaviricota</taxon>
        <taxon>Haploviricotina</taxon>
        <taxon>Monjiviricetes</taxon>
        <taxon>Mononegavirales</taxon>
        <taxon>Pneumoviridae</taxon>
        <taxon>Metapneumovirus</taxon>
        <taxon>Metapneumovirus hominis</taxon>
    </lineage>
</organism>
<keyword id="KW-1032">Host cell membrane</keyword>
<keyword id="KW-1035">Host cytoplasm</keyword>
<keyword id="KW-1043">Host membrane</keyword>
<keyword id="KW-1048">Host nucleus</keyword>
<keyword id="KW-0945">Host-virus interaction</keyword>
<keyword id="KW-0472">Membrane</keyword>
<keyword id="KW-0597">Phosphoprotein</keyword>
<keyword id="KW-1185">Reference proteome</keyword>
<keyword id="KW-0468">Viral matrix protein</keyword>
<keyword id="KW-0946">Virion</keyword>